<protein>
    <recommendedName>
        <fullName>Neudesin</fullName>
    </recommendedName>
    <alternativeName>
        <fullName>Neuron-derived neurotrophic factor</fullName>
    </alternativeName>
    <alternativeName>
        <fullName>SCIRP10-related protein</fullName>
    </alternativeName>
    <alternativeName>
        <fullName>Spinal cord injury-related protein 10</fullName>
    </alternativeName>
</protein>
<feature type="signal peptide" evidence="4">
    <location>
        <begin position="1"/>
        <end position="30"/>
    </location>
</feature>
<feature type="chain" id="PRO_0000042834" description="Neudesin">
    <location>
        <begin position="31"/>
        <end position="171"/>
    </location>
</feature>
<feature type="domain" description="Cytochrome b5 heme-binding" evidence="4">
    <location>
        <begin position="43"/>
        <end position="128"/>
    </location>
</feature>
<feature type="region of interest" description="Disordered" evidence="5">
    <location>
        <begin position="151"/>
        <end position="171"/>
    </location>
</feature>
<feature type="compositionally biased region" description="Basic and acidic residues" evidence="5">
    <location>
        <begin position="157"/>
        <end position="171"/>
    </location>
</feature>
<feature type="modified residue" description="N6-acetyllysine" evidence="3">
    <location>
        <position position="135"/>
    </location>
</feature>
<reference evidence="7" key="1">
    <citation type="submission" date="2004-05" db="EMBL/GenBank/DDBJ databases">
        <title>Spinal cord injury related protein 10.</title>
        <authorList>
            <person name="Liu S."/>
            <person name="Li X."/>
            <person name="Wang Y."/>
            <person name="Ma Z."/>
            <person name="Que H."/>
            <person name="Liu T."/>
        </authorList>
    </citation>
    <scope>NUCLEOTIDE SEQUENCE [MRNA]</scope>
</reference>
<reference key="2">
    <citation type="journal article" date="2019" name="IScience">
        <title>Rewiring of the Human Mitochondrial Interactome during Neuronal Reprogramming Reveals Regulators of the Respirasome and Neurogenesis.</title>
        <authorList>
            <person name="Moutaoufik M.T."/>
            <person name="Malty R."/>
            <person name="Amin S."/>
            <person name="Zhang Q."/>
            <person name="Phanse S."/>
            <person name="Gagarinova A."/>
            <person name="Zilocchi M."/>
            <person name="Hoell L."/>
            <person name="Minic Z."/>
            <person name="Gagarinova M."/>
            <person name="Aoki H."/>
            <person name="Stockwell J."/>
            <person name="Jessulat M."/>
            <person name="Goebels F."/>
            <person name="Broderick K."/>
            <person name="Scott N.E."/>
            <person name="Vlasblom J."/>
            <person name="Musso G."/>
            <person name="Prasad B."/>
            <person name="Lamantea E."/>
            <person name="Garavaglia B."/>
            <person name="Rajput A."/>
            <person name="Murayama K."/>
            <person name="Okazaki Y."/>
            <person name="Foster L.J."/>
            <person name="Bader G.D."/>
            <person name="Cayabyab F.S."/>
            <person name="Babu M."/>
        </authorList>
    </citation>
    <scope>FUNCTION</scope>
    <scope>INTERACTION WITH PINK1 AND PARK7</scope>
    <scope>SUBCELLULAR LOCATION</scope>
</reference>
<keyword id="KW-0007">Acetylation</keyword>
<keyword id="KW-0256">Endoplasmic reticulum</keyword>
<keyword id="KW-0349">Heme</keyword>
<keyword id="KW-0408">Iron</keyword>
<keyword id="KW-0479">Metal-binding</keyword>
<keyword id="KW-0496">Mitochondrion</keyword>
<keyword id="KW-1185">Reference proteome</keyword>
<keyword id="KW-0964">Secreted</keyword>
<keyword id="KW-0732">Signal</keyword>
<evidence type="ECO:0000250" key="1"/>
<evidence type="ECO:0000250" key="2">
    <source>
        <dbReference type="UniProtKB" id="Q9CQ45"/>
    </source>
</evidence>
<evidence type="ECO:0000250" key="3">
    <source>
        <dbReference type="UniProtKB" id="Q9UMX5"/>
    </source>
</evidence>
<evidence type="ECO:0000255" key="4"/>
<evidence type="ECO:0000256" key="5">
    <source>
        <dbReference type="SAM" id="MobiDB-lite"/>
    </source>
</evidence>
<evidence type="ECO:0000269" key="6">
    <source>
    </source>
</evidence>
<evidence type="ECO:0000312" key="7">
    <source>
        <dbReference type="EMBL" id="AAT39544.1"/>
    </source>
</evidence>
<name>NENF_RAT</name>
<organism>
    <name type="scientific">Rattus norvegicus</name>
    <name type="common">Rat</name>
    <dbReference type="NCBI Taxonomy" id="10116"/>
    <lineage>
        <taxon>Eukaryota</taxon>
        <taxon>Metazoa</taxon>
        <taxon>Chordata</taxon>
        <taxon>Craniata</taxon>
        <taxon>Vertebrata</taxon>
        <taxon>Euteleostomi</taxon>
        <taxon>Mammalia</taxon>
        <taxon>Eutheria</taxon>
        <taxon>Euarchontoglires</taxon>
        <taxon>Glires</taxon>
        <taxon>Rodentia</taxon>
        <taxon>Myomorpha</taxon>
        <taxon>Muroidea</taxon>
        <taxon>Muridae</taxon>
        <taxon>Murinae</taxon>
        <taxon>Rattus</taxon>
    </lineage>
</organism>
<proteinExistence type="evidence at protein level"/>
<sequence>MARPAPWWWLRPLAALALALALVRVPSARAGQMPRPAERGPPVRLFTEEELARYSGEEEDQPIYLAVKGVVFDVTSGKEFYGRGAPYNALAGKDSSRGVAKMSLDPADLTHDISGLTAKELEALDDIFSKVYKAKYPIVGYTARRILNEDGSPNLDFKPEDQPHFDIKDEF</sequence>
<accession>Q6IUR5</accession>
<gene>
    <name evidence="2" type="primary">Nenf</name>
    <name evidence="7" type="synonym">Scirp10</name>
</gene>
<comment type="function">
    <text evidence="2 6">Acts as a neurotrophic factor in postnatal mature neurons enhancing neuronal survival (PubMed:31536960). Promotes cell proliferation and neurogenesis in undifferentiated neural progenitor cells at the embryonic stage and inhibits differentiation of astrocytes (By similarity). Its neurotrophic activity is exerted via MAPK1/ERK2, MAPK3/ERK1 and AKT1/AKT pathways (By similarity). Neurotrophic activity is enhanced by binding to heme (By similarity). Also acts as an anorexigenic neurotrophic factor that contributes to energy balance (By similarity).</text>
</comment>
<comment type="subunit">
    <text evidence="6">Interacts with PINK1 and PARK7.</text>
</comment>
<comment type="subcellular location">
    <subcellularLocation>
        <location evidence="2">Secreted</location>
        <location evidence="2">Extracellular space</location>
    </subcellularLocation>
    <subcellularLocation>
        <location evidence="6">Mitochondrion</location>
    </subcellularLocation>
    <subcellularLocation>
        <location evidence="6">Endoplasmic reticulum</location>
    </subcellularLocation>
    <text evidence="3">Localized to mitochondria and endoplasmic reticulum by PINK1 and PARK7.</text>
</comment>
<comment type="domain">
    <text evidence="1">The cytochrome b5 heme-binding domain was proven to bind heme, although it lacks the conserved iron-binding His residue at position 81.</text>
</comment>
<comment type="miscellaneous">
    <text evidence="3">Non-classical progesterone receptors involved in extranuclear signaling are classified in 2 groups: the class II progestin and adipoQ receptor (PAQR) family (also called mPRs) (PAQR5, PAQR6, PAQR7, PAQR8 and PAQR9) and the b5-like heme/steroid-binding protein family (also called MAPRs) (PGRMC1, PGRMC2, NENF and CYB5D2).</text>
</comment>
<comment type="similarity">
    <text evidence="4">Belongs to the cytochrome b5 family. MAPR subfamily.</text>
</comment>
<dbReference type="EMBL" id="AY623793">
    <property type="protein sequence ID" value="AAT39544.1"/>
    <property type="molecule type" value="mRNA"/>
</dbReference>
<dbReference type="RefSeq" id="NP_001002851.1">
    <property type="nucleotide sequence ID" value="NM_001002851.1"/>
</dbReference>
<dbReference type="SMR" id="Q6IUR5"/>
<dbReference type="FunCoup" id="Q6IUR5">
    <property type="interactions" value="385"/>
</dbReference>
<dbReference type="STRING" id="10116.ENSRNOP00000005190"/>
<dbReference type="PhosphoSitePlus" id="Q6IUR5"/>
<dbReference type="jPOST" id="Q6IUR5"/>
<dbReference type="PaxDb" id="10116-ENSRNOP00000005190"/>
<dbReference type="Ensembl" id="ENSRNOT00000005190.5">
    <property type="protein sequence ID" value="ENSRNOP00000005190.3"/>
    <property type="gene ID" value="ENSRNOG00000003833.5"/>
</dbReference>
<dbReference type="GeneID" id="289380"/>
<dbReference type="KEGG" id="rno:289380"/>
<dbReference type="AGR" id="RGD:1303289"/>
<dbReference type="CTD" id="29937"/>
<dbReference type="RGD" id="1303289">
    <property type="gene designation" value="Nenf"/>
</dbReference>
<dbReference type="eggNOG" id="KOG1110">
    <property type="taxonomic scope" value="Eukaryota"/>
</dbReference>
<dbReference type="GeneTree" id="ENSGT00940000162504"/>
<dbReference type="HOGENOM" id="CLU_134788_0_0_1"/>
<dbReference type="InParanoid" id="Q6IUR5"/>
<dbReference type="OMA" id="VGYTAQR"/>
<dbReference type="OrthoDB" id="547796at2759"/>
<dbReference type="PhylomeDB" id="Q6IUR5"/>
<dbReference type="TreeFam" id="TF332131"/>
<dbReference type="PRO" id="PR:Q6IUR5"/>
<dbReference type="Proteomes" id="UP000002494">
    <property type="component" value="Chromosome 13"/>
</dbReference>
<dbReference type="Bgee" id="ENSRNOG00000003833">
    <property type="expression patterns" value="Expressed in heart and 19 other cell types or tissues"/>
</dbReference>
<dbReference type="GO" id="GO:0012505">
    <property type="term" value="C:endomembrane system"/>
    <property type="evidence" value="ECO:0000318"/>
    <property type="project" value="GO_Central"/>
</dbReference>
<dbReference type="GO" id="GO:0005783">
    <property type="term" value="C:endoplasmic reticulum"/>
    <property type="evidence" value="ECO:0000314"/>
    <property type="project" value="UniProtKB"/>
</dbReference>
<dbReference type="GO" id="GO:0005615">
    <property type="term" value="C:extracellular space"/>
    <property type="evidence" value="ECO:0000266"/>
    <property type="project" value="RGD"/>
</dbReference>
<dbReference type="GO" id="GO:0016020">
    <property type="term" value="C:membrane"/>
    <property type="evidence" value="ECO:0000318"/>
    <property type="project" value="GO_Central"/>
</dbReference>
<dbReference type="GO" id="GO:0005739">
    <property type="term" value="C:mitochondrion"/>
    <property type="evidence" value="ECO:0000314"/>
    <property type="project" value="UniProtKB"/>
</dbReference>
<dbReference type="GO" id="GO:0008083">
    <property type="term" value="F:growth factor activity"/>
    <property type="evidence" value="ECO:0000266"/>
    <property type="project" value="RGD"/>
</dbReference>
<dbReference type="GO" id="GO:0046872">
    <property type="term" value="F:metal ion binding"/>
    <property type="evidence" value="ECO:0007669"/>
    <property type="project" value="UniProtKB-KW"/>
</dbReference>
<dbReference type="GO" id="GO:0000165">
    <property type="term" value="P:MAPK cascade"/>
    <property type="evidence" value="ECO:0000266"/>
    <property type="project" value="RGD"/>
</dbReference>
<dbReference type="GO" id="GO:0032099">
    <property type="term" value="P:negative regulation of appetite"/>
    <property type="evidence" value="ECO:0000250"/>
    <property type="project" value="UniProtKB"/>
</dbReference>
<dbReference type="GO" id="GO:0043410">
    <property type="term" value="P:positive regulation of MAPK cascade"/>
    <property type="evidence" value="ECO:0000266"/>
    <property type="project" value="RGD"/>
</dbReference>
<dbReference type="FunFam" id="3.10.120.10:FF:000013">
    <property type="entry name" value="Neudesin"/>
    <property type="match status" value="1"/>
</dbReference>
<dbReference type="Gene3D" id="3.10.120.10">
    <property type="entry name" value="Cytochrome b5-like heme/steroid binding domain"/>
    <property type="match status" value="1"/>
</dbReference>
<dbReference type="InterPro" id="IPR001199">
    <property type="entry name" value="Cyt_B5-like_heme/steroid-bd"/>
</dbReference>
<dbReference type="InterPro" id="IPR036400">
    <property type="entry name" value="Cyt_B5-like_heme/steroid_sf"/>
</dbReference>
<dbReference type="InterPro" id="IPR050577">
    <property type="entry name" value="MAPR/NEUFC/NENF-like"/>
</dbReference>
<dbReference type="PANTHER" id="PTHR10281">
    <property type="entry name" value="MEMBRANE-ASSOCIATED PROGESTERONE RECEPTOR COMPONENT-RELATED"/>
    <property type="match status" value="1"/>
</dbReference>
<dbReference type="PANTHER" id="PTHR10281:SF72">
    <property type="entry name" value="NEUDESIN"/>
    <property type="match status" value="1"/>
</dbReference>
<dbReference type="Pfam" id="PF00173">
    <property type="entry name" value="Cyt-b5"/>
    <property type="match status" value="1"/>
</dbReference>
<dbReference type="SMART" id="SM01117">
    <property type="entry name" value="Cyt-b5"/>
    <property type="match status" value="1"/>
</dbReference>
<dbReference type="SUPFAM" id="SSF55856">
    <property type="entry name" value="Cytochrome b5-like heme/steroid binding domain"/>
    <property type="match status" value="1"/>
</dbReference>